<comment type="function">
    <text evidence="1">Scaffold protein in the commander complex that is essential for endosomal recycling of transmembrane cargos; the commander complex is composed of the CCC subcomplex and the retriever subcomplex (By similarity). Can modulate activity of cullin-RING E3 ubiquitin ligase (CRL) complexes by displacing CAND1; in vitro promotes CRL E3 activity and dissociates CAND1 from CUL1 and CUL2 (By similarity). Promotes ubiquitination of NF-kappa-B subunit RELA and its subsequent proteasomal degradation. Down-regulates NF-kappa-B activity (By similarity). Involved in the regulation of membrane expression and ubiquitination of SLC12A2 (By similarity). Modulates Na(+) transport in epithelial cells by regulation of apical cell surface expression of amiloride-sensitive sodium channel (ENaC) subunits and by promoting their ubiquitination presumably involving NEDD4L. Promotes the localization of SCNN1D to recycling endosomes (By similarity). Promotes CFTR cell surface expression through regulation of its ubiquitination (By similarity). Down-regulates SOD1 activity by interfering with its homodimerization (By similarity). Plays a role in copper ion homeostasis. Involved in copper-dependent ATP7A trafficking between the trans-Golgi network and vesicles in the cell periphery; the function is proposed to depend on its association within the CCC complex and cooperation with the WASH complex on early endosomes (By similarity). Can bind one copper ion per monomer (By similarity). May function to facilitate biliary copper excretion within hepatocytes. Binds to phosphatidylinositol 4,5-bisphosphate (PtdIns(4,5)P2) (By similarity). Involved in the regulation of HIF1A-mediated transcription; competes with ARNT/Hif-1-beta for binding to HIF1A resulting in decreased DNA binding and impaired transcriptional activation by HIF-1 (By similarity). Negatively regulates neuroblastoma G1/S phase cell cycle progression and cell proliferation by stimulating ubiquitination of NF-kappa-B subunit RELA and NF-kappa-B degradation in a FAM107A- and actin-dependent manner (By similarity).</text>
</comment>
<comment type="subunit">
    <text evidence="1">Component of the commander complex consisting of the CCC subcomplex and the retriever subcomplex (By similarity). Component of the CCC (COMMD/CCDC22/CCDC93) subcomplex consisting of COMMD1, COMMD2, COMMD3, COMMD4, COMMD5, COMMD6, COMMD7, COMMD8, COMMD9, COMMD10, CCDC22 and CCDC93; within the complex forms a heterodimer with COMMD6 (By similarity). Interacts with VPS35L; the interaction associates the CCC complex with the retriever complex (By similarity). Identified in a complex with an E3 ubiquitin ligase complex composed of TCEB1/elongin C, CUL2, SOCS1 and RBX1; in the complex interacts directly with SOCS1 and CUL2 (By similarity). Identified in a complex with NF-kappa-B (By similarity). Interacts directly with SLC12A2 (By similarity). Interacts directly with ATP7B (via the N-terminal region) (By similarity). Interacts with ATP7A (By similarity). Interacts with FAM107A; this interaction stabilizes COMMD1 in the nucleus (By similarity). Interacts with CCS, CDKN2A, RELA, REL, RELB, NFKB1/p105, NFKB2/p100, NFKBIB, SCNN1D, SCNN1B, CFTR, CLU, SGK1, AKT1, CUL1, CUL2, CUL3, CUL4A, CUL4B, CUL5, CUL7, HIF1A (By similarity).</text>
</comment>
<comment type="subcellular location">
    <subcellularLocation>
        <location evidence="1">Nucleus</location>
    </subcellularLocation>
    <subcellularLocation>
        <location evidence="1">Cytoplasm</location>
    </subcellularLocation>
    <subcellularLocation>
        <location evidence="1">Endosome membrane</location>
    </subcellularLocation>
    <subcellularLocation>
        <location evidence="1">Cytoplasmic vesicle</location>
    </subcellularLocation>
    <subcellularLocation>
        <location evidence="1">Early endosome</location>
    </subcellularLocation>
    <subcellularLocation>
        <location evidence="1">Recycling endosome</location>
    </subcellularLocation>
    <text evidence="1">Shuttles between nucleus and cytosol. Detected in perinuclear foci that may be aggresomes containing misfolded, ubiquitinated proteins (By similarity).</text>
</comment>
<comment type="PTM">
    <text evidence="1">Ubiquitinated; undergoes both 'Lys-63'- and 'Lys-48'-linked polyubiquitination. Ubiquitinated by XIAP, leading to its proteasomal degradation (By similarity).</text>
</comment>
<comment type="similarity">
    <text evidence="4">Belongs to the COMM domain-containing protein 1 family.</text>
</comment>
<accession>Q8K4M5</accession>
<accession>Q3V012</accession>
<accession>Q80WG2</accession>
<accession>Q80Z41</accession>
<accession>Q8BNL9</accession>
<accession>Q8K2S9</accession>
<name>COMD1_MOUSE</name>
<proteinExistence type="evidence at protein level"/>
<gene>
    <name type="primary">Commd1</name>
    <name type="synonym">Murr1</name>
</gene>
<sequence>MAGDLEGGKSLSGLLSGLAQNAFHGHSGVTEELLHSQLYPEVPPEEFRPFLAKMRGLLKSIASADMDFNQLEAFLTAQTKKQGGITSEQAAVISKFWKSHKIKIRESLMKQSRWDNGLRGLSWRVDGKSQSRHSTQIHSPVAIIELEFGKNGQESEFLCLEFDEVKVKQILKKLSEVEESINRLMQAA</sequence>
<keyword id="KW-0186">Copper</keyword>
<keyword id="KW-0963">Cytoplasm</keyword>
<keyword id="KW-0968">Cytoplasmic vesicle</keyword>
<keyword id="KW-0967">Endosome</keyword>
<keyword id="KW-0472">Membrane</keyword>
<keyword id="KW-0479">Metal-binding</keyword>
<keyword id="KW-0539">Nucleus</keyword>
<keyword id="KW-0653">Protein transport</keyword>
<keyword id="KW-1185">Reference proteome</keyword>
<keyword id="KW-0804">Transcription</keyword>
<keyword id="KW-0805">Transcription regulation</keyword>
<keyword id="KW-0813">Transport</keyword>
<keyword id="KW-0832">Ubl conjugation</keyword>
<keyword id="KW-0833">Ubl conjugation pathway</keyword>
<feature type="chain" id="PRO_0000077385" description="COMM domain-containing protein 1">
    <location>
        <begin position="1"/>
        <end position="188"/>
    </location>
</feature>
<feature type="domain" description="COMM" evidence="3">
    <location>
        <begin position="117"/>
        <end position="185"/>
    </location>
</feature>
<feature type="region of interest" description="Sufficient for interaction with SLC12A2" evidence="1">
    <location>
        <begin position="1"/>
        <end position="122"/>
    </location>
</feature>
<feature type="region of interest" description="Required for binding to PtdIns(4,5)P2" evidence="1">
    <location>
        <begin position="124"/>
        <end position="188"/>
    </location>
</feature>
<feature type="binding site" evidence="2">
    <location>
        <position position="100"/>
    </location>
    <ligand>
        <name>Cu cation</name>
        <dbReference type="ChEBI" id="CHEBI:23378"/>
    </ligand>
</feature>
<feature type="binding site" evidence="2">
    <location>
        <position position="109"/>
    </location>
    <ligand>
        <name>Cu cation</name>
        <dbReference type="ChEBI" id="CHEBI:23378"/>
    </ligand>
</feature>
<feature type="binding site" evidence="2">
    <location>
        <position position="133"/>
    </location>
    <ligand>
        <name>Cu cation</name>
        <dbReference type="ChEBI" id="CHEBI:23378"/>
    </ligand>
</feature>
<feature type="sequence conflict" description="In Ref. 3; AAH51210." evidence="4" ref="3">
    <original>L</original>
    <variation>H</variation>
    <location>
        <position position="5"/>
    </location>
</feature>
<reference key="1">
    <citation type="journal article" date="2005" name="Science">
        <title>The transcriptional landscape of the mammalian genome.</title>
        <authorList>
            <person name="Carninci P."/>
            <person name="Kasukawa T."/>
            <person name="Katayama S."/>
            <person name="Gough J."/>
            <person name="Frith M.C."/>
            <person name="Maeda N."/>
            <person name="Oyama R."/>
            <person name="Ravasi T."/>
            <person name="Lenhard B."/>
            <person name="Wells C."/>
            <person name="Kodzius R."/>
            <person name="Shimokawa K."/>
            <person name="Bajic V.B."/>
            <person name="Brenner S.E."/>
            <person name="Batalov S."/>
            <person name="Forrest A.R."/>
            <person name="Zavolan M."/>
            <person name="Davis M.J."/>
            <person name="Wilming L.G."/>
            <person name="Aidinis V."/>
            <person name="Allen J.E."/>
            <person name="Ambesi-Impiombato A."/>
            <person name="Apweiler R."/>
            <person name="Aturaliya R.N."/>
            <person name="Bailey T.L."/>
            <person name="Bansal M."/>
            <person name="Baxter L."/>
            <person name="Beisel K.W."/>
            <person name="Bersano T."/>
            <person name="Bono H."/>
            <person name="Chalk A.M."/>
            <person name="Chiu K.P."/>
            <person name="Choudhary V."/>
            <person name="Christoffels A."/>
            <person name="Clutterbuck D.R."/>
            <person name="Crowe M.L."/>
            <person name="Dalla E."/>
            <person name="Dalrymple B.P."/>
            <person name="de Bono B."/>
            <person name="Della Gatta G."/>
            <person name="di Bernardo D."/>
            <person name="Down T."/>
            <person name="Engstrom P."/>
            <person name="Fagiolini M."/>
            <person name="Faulkner G."/>
            <person name="Fletcher C.F."/>
            <person name="Fukushima T."/>
            <person name="Furuno M."/>
            <person name="Futaki S."/>
            <person name="Gariboldi M."/>
            <person name="Georgii-Hemming P."/>
            <person name="Gingeras T.R."/>
            <person name="Gojobori T."/>
            <person name="Green R.E."/>
            <person name="Gustincich S."/>
            <person name="Harbers M."/>
            <person name="Hayashi Y."/>
            <person name="Hensch T.K."/>
            <person name="Hirokawa N."/>
            <person name="Hill D."/>
            <person name="Huminiecki L."/>
            <person name="Iacono M."/>
            <person name="Ikeo K."/>
            <person name="Iwama A."/>
            <person name="Ishikawa T."/>
            <person name="Jakt M."/>
            <person name="Kanapin A."/>
            <person name="Katoh M."/>
            <person name="Kawasawa Y."/>
            <person name="Kelso J."/>
            <person name="Kitamura H."/>
            <person name="Kitano H."/>
            <person name="Kollias G."/>
            <person name="Krishnan S.P."/>
            <person name="Kruger A."/>
            <person name="Kummerfeld S.K."/>
            <person name="Kurochkin I.V."/>
            <person name="Lareau L.F."/>
            <person name="Lazarevic D."/>
            <person name="Lipovich L."/>
            <person name="Liu J."/>
            <person name="Liuni S."/>
            <person name="McWilliam S."/>
            <person name="Madan Babu M."/>
            <person name="Madera M."/>
            <person name="Marchionni L."/>
            <person name="Matsuda H."/>
            <person name="Matsuzawa S."/>
            <person name="Miki H."/>
            <person name="Mignone F."/>
            <person name="Miyake S."/>
            <person name="Morris K."/>
            <person name="Mottagui-Tabar S."/>
            <person name="Mulder N."/>
            <person name="Nakano N."/>
            <person name="Nakauchi H."/>
            <person name="Ng P."/>
            <person name="Nilsson R."/>
            <person name="Nishiguchi S."/>
            <person name="Nishikawa S."/>
            <person name="Nori F."/>
            <person name="Ohara O."/>
            <person name="Okazaki Y."/>
            <person name="Orlando V."/>
            <person name="Pang K.C."/>
            <person name="Pavan W.J."/>
            <person name="Pavesi G."/>
            <person name="Pesole G."/>
            <person name="Petrovsky N."/>
            <person name="Piazza S."/>
            <person name="Reed J."/>
            <person name="Reid J.F."/>
            <person name="Ring B.Z."/>
            <person name="Ringwald M."/>
            <person name="Rost B."/>
            <person name="Ruan Y."/>
            <person name="Salzberg S.L."/>
            <person name="Sandelin A."/>
            <person name="Schneider C."/>
            <person name="Schoenbach C."/>
            <person name="Sekiguchi K."/>
            <person name="Semple C.A."/>
            <person name="Seno S."/>
            <person name="Sessa L."/>
            <person name="Sheng Y."/>
            <person name="Shibata Y."/>
            <person name="Shimada H."/>
            <person name="Shimada K."/>
            <person name="Silva D."/>
            <person name="Sinclair B."/>
            <person name="Sperling S."/>
            <person name="Stupka E."/>
            <person name="Sugiura K."/>
            <person name="Sultana R."/>
            <person name="Takenaka Y."/>
            <person name="Taki K."/>
            <person name="Tammoja K."/>
            <person name="Tan S.L."/>
            <person name="Tang S."/>
            <person name="Taylor M.S."/>
            <person name="Tegner J."/>
            <person name="Teichmann S.A."/>
            <person name="Ueda H.R."/>
            <person name="van Nimwegen E."/>
            <person name="Verardo R."/>
            <person name="Wei C.L."/>
            <person name="Yagi K."/>
            <person name="Yamanishi H."/>
            <person name="Zabarovsky E."/>
            <person name="Zhu S."/>
            <person name="Zimmer A."/>
            <person name="Hide W."/>
            <person name="Bult C."/>
            <person name="Grimmond S.M."/>
            <person name="Teasdale R.D."/>
            <person name="Liu E.T."/>
            <person name="Brusic V."/>
            <person name="Quackenbush J."/>
            <person name="Wahlestedt C."/>
            <person name="Mattick J.S."/>
            <person name="Hume D.A."/>
            <person name="Kai C."/>
            <person name="Sasaki D."/>
            <person name="Tomaru Y."/>
            <person name="Fukuda S."/>
            <person name="Kanamori-Katayama M."/>
            <person name="Suzuki M."/>
            <person name="Aoki J."/>
            <person name="Arakawa T."/>
            <person name="Iida J."/>
            <person name="Imamura K."/>
            <person name="Itoh M."/>
            <person name="Kato T."/>
            <person name="Kawaji H."/>
            <person name="Kawagashira N."/>
            <person name="Kawashima T."/>
            <person name="Kojima M."/>
            <person name="Kondo S."/>
            <person name="Konno H."/>
            <person name="Nakano K."/>
            <person name="Ninomiya N."/>
            <person name="Nishio T."/>
            <person name="Okada M."/>
            <person name="Plessy C."/>
            <person name="Shibata K."/>
            <person name="Shiraki T."/>
            <person name="Suzuki S."/>
            <person name="Tagami M."/>
            <person name="Waki K."/>
            <person name="Watahiki A."/>
            <person name="Okamura-Oho Y."/>
            <person name="Suzuki H."/>
            <person name="Kawai J."/>
            <person name="Hayashizaki Y."/>
        </authorList>
    </citation>
    <scope>NUCLEOTIDE SEQUENCE [LARGE SCALE MRNA]</scope>
    <source>
        <strain>C57BL/6J</strain>
        <tissue>Ovary</tissue>
        <tissue>Uterus</tissue>
    </source>
</reference>
<reference key="2">
    <citation type="journal article" date="2004" name="Mol. Cell. Biol.">
        <title>The mouse Murr1 gene is imprinted in the adult brain, presumably due to transcriptional interference by the antisense-oriented U2af1-rs1 gene.</title>
        <authorList>
            <person name="Wang Y."/>
            <person name="Joh K."/>
            <person name="Masuko S."/>
            <person name="Yatsuki H."/>
            <person name="Soejima H."/>
            <person name="Nabetani A."/>
            <person name="Beechey C.V."/>
            <person name="Okinami S."/>
            <person name="Mukai T."/>
        </authorList>
    </citation>
    <scope>NUCLEOTIDE SEQUENCE [GENOMIC DNA] OF 1-59</scope>
    <scope>NUCLEOTIDE SEQUENCE [MRNA] OF 1-23</scope>
    <source>
        <strain>C57BL/6J</strain>
    </source>
</reference>
<reference key="3">
    <citation type="journal article" date="2004" name="Genome Res.">
        <title>The status, quality, and expansion of the NIH full-length cDNA project: the Mammalian Gene Collection (MGC).</title>
        <authorList>
            <consortium name="The MGC Project Team"/>
        </authorList>
    </citation>
    <scope>NUCLEOTIDE SEQUENCE [LARGE SCALE MRNA] OF 5-188</scope>
    <source>
        <strain>C57BL/6J</strain>
        <tissue>Mammary gland</tissue>
    </source>
</reference>
<reference key="4">
    <citation type="journal article" date="2010" name="Cell">
        <title>A tissue-specific atlas of mouse protein phosphorylation and expression.</title>
        <authorList>
            <person name="Huttlin E.L."/>
            <person name="Jedrychowski M.P."/>
            <person name="Elias J.E."/>
            <person name="Goswami T."/>
            <person name="Rad R."/>
            <person name="Beausoleil S.A."/>
            <person name="Villen J."/>
            <person name="Haas W."/>
            <person name="Sowa M.E."/>
            <person name="Gygi S.P."/>
        </authorList>
    </citation>
    <scope>IDENTIFICATION BY MASS SPECTROMETRY [LARGE SCALE ANALYSIS]</scope>
    <source>
        <tissue>Brain</tissue>
        <tissue>Kidney</tissue>
        <tissue>Lung</tissue>
        <tissue>Pancreas</tissue>
        <tissue>Spleen</tissue>
    </source>
</reference>
<evidence type="ECO:0000250" key="1">
    <source>
        <dbReference type="UniProtKB" id="Q8N668"/>
    </source>
</evidence>
<evidence type="ECO:0000255" key="2"/>
<evidence type="ECO:0000255" key="3">
    <source>
        <dbReference type="PROSITE-ProRule" id="PRU00602"/>
    </source>
</evidence>
<evidence type="ECO:0000305" key="4"/>
<protein>
    <recommendedName>
        <fullName>COMM domain-containing protein 1</fullName>
    </recommendedName>
    <alternativeName>
        <fullName>Protein Murr1</fullName>
    </alternativeName>
</protein>
<dbReference type="EMBL" id="AK133507">
    <property type="protein sequence ID" value="BAE21693.1"/>
    <property type="molecule type" value="mRNA"/>
</dbReference>
<dbReference type="EMBL" id="AB089806">
    <property type="protein sequence ID" value="BAC07535.1"/>
    <property type="molecule type" value="Genomic_DNA"/>
</dbReference>
<dbReference type="EMBL" id="AB104816">
    <property type="protein sequence ID" value="BAC57942.1"/>
    <property type="molecule type" value="mRNA"/>
</dbReference>
<dbReference type="EMBL" id="BC030052">
    <property type="protein sequence ID" value="AAH30052.1"/>
    <property type="molecule type" value="mRNA"/>
</dbReference>
<dbReference type="EMBL" id="BC051210">
    <property type="protein sequence ID" value="AAH51210.1"/>
    <property type="molecule type" value="mRNA"/>
</dbReference>
<dbReference type="CCDS" id="CCDS24472.1"/>
<dbReference type="RefSeq" id="NP_653097.2">
    <property type="nucleotide sequence ID" value="NM_144514.2"/>
</dbReference>
<dbReference type="SMR" id="Q8K4M5"/>
<dbReference type="BioGRID" id="201620">
    <property type="interactions" value="1"/>
</dbReference>
<dbReference type="FunCoup" id="Q8K4M5">
    <property type="interactions" value="1320"/>
</dbReference>
<dbReference type="IntAct" id="Q8K4M5">
    <property type="interactions" value="3"/>
</dbReference>
<dbReference type="MINT" id="Q8K4M5"/>
<dbReference type="STRING" id="10090.ENSMUSP00000124719"/>
<dbReference type="iPTMnet" id="Q8K4M5"/>
<dbReference type="PhosphoSitePlus" id="Q8K4M5"/>
<dbReference type="PaxDb" id="10090-ENSMUSP00000124719"/>
<dbReference type="ProteomicsDB" id="283602"/>
<dbReference type="Pumba" id="Q8K4M5"/>
<dbReference type="DNASU" id="17846"/>
<dbReference type="Ensembl" id="ENSMUST00000159081.8">
    <property type="protein sequence ID" value="ENSMUSP00000124719.2"/>
    <property type="gene ID" value="ENSMUSG00000051355.19"/>
</dbReference>
<dbReference type="GeneID" id="17846"/>
<dbReference type="KEGG" id="mmu:17846"/>
<dbReference type="UCSC" id="uc007iel.1">
    <property type="organism name" value="mouse"/>
</dbReference>
<dbReference type="AGR" id="MGI:109474"/>
<dbReference type="CTD" id="150684"/>
<dbReference type="MGI" id="MGI:109474">
    <property type="gene designation" value="Commd1"/>
</dbReference>
<dbReference type="VEuPathDB" id="HostDB:ENSMUSG00000051355"/>
<dbReference type="eggNOG" id="ENOG502RXN6">
    <property type="taxonomic scope" value="Eukaryota"/>
</dbReference>
<dbReference type="GeneTree" id="ENSGT00390000012029"/>
<dbReference type="HOGENOM" id="CLU_126878_0_0_1"/>
<dbReference type="InParanoid" id="Q8K4M5"/>
<dbReference type="OMA" id="DMKWRID"/>
<dbReference type="PhylomeDB" id="Q8K4M5"/>
<dbReference type="TreeFam" id="TF332823"/>
<dbReference type="Reactome" id="R-MMU-8951664">
    <property type="pathway name" value="Neddylation"/>
</dbReference>
<dbReference type="BioGRID-ORCS" id="17846">
    <property type="hits" value="3 hits in 77 CRISPR screens"/>
</dbReference>
<dbReference type="ChiTaRS" id="Commd1">
    <property type="organism name" value="mouse"/>
</dbReference>
<dbReference type="PRO" id="PR:Q8K4M5"/>
<dbReference type="Proteomes" id="UP000000589">
    <property type="component" value="Chromosome 11"/>
</dbReference>
<dbReference type="RNAct" id="Q8K4M5">
    <property type="molecule type" value="protein"/>
</dbReference>
<dbReference type="Bgee" id="ENSMUSG00000051355">
    <property type="expression patterns" value="Expressed in floor plate of midbrain and 274 other cell types or tissues"/>
</dbReference>
<dbReference type="ExpressionAtlas" id="Q8K4M5">
    <property type="expression patterns" value="baseline and differential"/>
</dbReference>
<dbReference type="GO" id="GO:0031462">
    <property type="term" value="C:Cul2-RING ubiquitin ligase complex"/>
    <property type="evidence" value="ECO:0000250"/>
    <property type="project" value="UniProtKB"/>
</dbReference>
<dbReference type="GO" id="GO:0005737">
    <property type="term" value="C:cytoplasm"/>
    <property type="evidence" value="ECO:0000250"/>
    <property type="project" value="UniProtKB"/>
</dbReference>
<dbReference type="GO" id="GO:0005829">
    <property type="term" value="C:cytosol"/>
    <property type="evidence" value="ECO:0007669"/>
    <property type="project" value="Ensembl"/>
</dbReference>
<dbReference type="GO" id="GO:0005769">
    <property type="term" value="C:early endosome"/>
    <property type="evidence" value="ECO:0007669"/>
    <property type="project" value="UniProtKB-SubCell"/>
</dbReference>
<dbReference type="GO" id="GO:0005768">
    <property type="term" value="C:endosome"/>
    <property type="evidence" value="ECO:0000314"/>
    <property type="project" value="MGI"/>
</dbReference>
<dbReference type="GO" id="GO:0010008">
    <property type="term" value="C:endosome membrane"/>
    <property type="evidence" value="ECO:0007669"/>
    <property type="project" value="UniProtKB-SubCell"/>
</dbReference>
<dbReference type="GO" id="GO:0005654">
    <property type="term" value="C:nucleoplasm"/>
    <property type="evidence" value="ECO:0007669"/>
    <property type="project" value="Ensembl"/>
</dbReference>
<dbReference type="GO" id="GO:0005634">
    <property type="term" value="C:nucleus"/>
    <property type="evidence" value="ECO:0000250"/>
    <property type="project" value="UniProtKB"/>
</dbReference>
<dbReference type="GO" id="GO:0055037">
    <property type="term" value="C:recycling endosome"/>
    <property type="evidence" value="ECO:0007669"/>
    <property type="project" value="UniProtKB-SubCell"/>
</dbReference>
<dbReference type="GO" id="GO:0005507">
    <property type="term" value="F:copper ion binding"/>
    <property type="evidence" value="ECO:0000250"/>
    <property type="project" value="UniProtKB"/>
</dbReference>
<dbReference type="GO" id="GO:0050750">
    <property type="term" value="F:low-density lipoprotein particle receptor binding"/>
    <property type="evidence" value="ECO:0000266"/>
    <property type="project" value="MGI"/>
</dbReference>
<dbReference type="GO" id="GO:0070300">
    <property type="term" value="F:phosphatidic acid binding"/>
    <property type="evidence" value="ECO:0007669"/>
    <property type="project" value="Ensembl"/>
</dbReference>
<dbReference type="GO" id="GO:0005547">
    <property type="term" value="F:phosphatidylinositol-3,4,5-trisphosphate binding"/>
    <property type="evidence" value="ECO:0007669"/>
    <property type="project" value="Ensembl"/>
</dbReference>
<dbReference type="GO" id="GO:0043325">
    <property type="term" value="F:phosphatidylinositol-3,4-bisphosphate binding"/>
    <property type="evidence" value="ECO:0007669"/>
    <property type="project" value="Ensembl"/>
</dbReference>
<dbReference type="GO" id="GO:0080025">
    <property type="term" value="F:phosphatidylinositol-3,5-bisphosphate binding"/>
    <property type="evidence" value="ECO:0007669"/>
    <property type="project" value="Ensembl"/>
</dbReference>
<dbReference type="GO" id="GO:0005546">
    <property type="term" value="F:phosphatidylinositol-4,5-bisphosphate binding"/>
    <property type="evidence" value="ECO:0007669"/>
    <property type="project" value="Ensembl"/>
</dbReference>
<dbReference type="GO" id="GO:0042803">
    <property type="term" value="F:protein homodimerization activity"/>
    <property type="evidence" value="ECO:0007669"/>
    <property type="project" value="Ensembl"/>
</dbReference>
<dbReference type="GO" id="GO:0019871">
    <property type="term" value="F:sodium channel inhibitor activity"/>
    <property type="evidence" value="ECO:0000266"/>
    <property type="project" value="MGI"/>
</dbReference>
<dbReference type="GO" id="GO:0042632">
    <property type="term" value="P:cholesterol homeostasis"/>
    <property type="evidence" value="ECO:0000315"/>
    <property type="project" value="MGI"/>
</dbReference>
<dbReference type="GO" id="GO:0055070">
    <property type="term" value="P:copper ion homeostasis"/>
    <property type="evidence" value="ECO:0000250"/>
    <property type="project" value="UniProtKB"/>
</dbReference>
<dbReference type="GO" id="GO:0006893">
    <property type="term" value="P:Golgi to plasma membrane transport"/>
    <property type="evidence" value="ECO:0007669"/>
    <property type="project" value="Ensembl"/>
</dbReference>
<dbReference type="GO" id="GO:0006878">
    <property type="term" value="P:intracellular copper ion homeostasis"/>
    <property type="evidence" value="ECO:0000266"/>
    <property type="project" value="MGI"/>
</dbReference>
<dbReference type="GO" id="GO:0034383">
    <property type="term" value="P:low-density lipoprotein particle clearance"/>
    <property type="evidence" value="ECO:0000315"/>
    <property type="project" value="MGI"/>
</dbReference>
<dbReference type="GO" id="GO:1902072">
    <property type="term" value="P:negative regulation of hypoxia-inducible factor-1alpha signaling pathway"/>
    <property type="evidence" value="ECO:0000315"/>
    <property type="project" value="MGI"/>
</dbReference>
<dbReference type="GO" id="GO:0032088">
    <property type="term" value="P:negative regulation of NF-kappaB transcription factor activity"/>
    <property type="evidence" value="ECO:0000250"/>
    <property type="project" value="UniProtKB"/>
</dbReference>
<dbReference type="GO" id="GO:2000009">
    <property type="term" value="P:negative regulation of protein localization to cell surface"/>
    <property type="evidence" value="ECO:0007669"/>
    <property type="project" value="Ensembl"/>
</dbReference>
<dbReference type="GO" id="GO:1902306">
    <property type="term" value="P:negative regulation of sodium ion transmembrane transport"/>
    <property type="evidence" value="ECO:0007669"/>
    <property type="project" value="Ensembl"/>
</dbReference>
<dbReference type="GO" id="GO:0006289">
    <property type="term" value="P:nucleotide-excision repair"/>
    <property type="evidence" value="ECO:0007669"/>
    <property type="project" value="Ensembl"/>
</dbReference>
<dbReference type="GO" id="GO:0048227">
    <property type="term" value="P:plasma membrane to endosome transport"/>
    <property type="evidence" value="ECO:0007669"/>
    <property type="project" value="Ensembl"/>
</dbReference>
<dbReference type="GO" id="GO:1904109">
    <property type="term" value="P:positive regulation of cholesterol import"/>
    <property type="evidence" value="ECO:0000315"/>
    <property type="project" value="MGI"/>
</dbReference>
<dbReference type="GO" id="GO:1905751">
    <property type="term" value="P:positive regulation of endosome to plasma membrane protein transport"/>
    <property type="evidence" value="ECO:0000315"/>
    <property type="project" value="MGI"/>
</dbReference>
<dbReference type="GO" id="GO:2000010">
    <property type="term" value="P:positive regulation of protein localization to cell surface"/>
    <property type="evidence" value="ECO:0000315"/>
    <property type="project" value="MGI"/>
</dbReference>
<dbReference type="GO" id="GO:0031398">
    <property type="term" value="P:positive regulation of protein ubiquitination"/>
    <property type="evidence" value="ECO:0000250"/>
    <property type="project" value="UniProtKB"/>
</dbReference>
<dbReference type="GO" id="GO:0031648">
    <property type="term" value="P:protein destabilization"/>
    <property type="evidence" value="ECO:0000315"/>
    <property type="project" value="MGI"/>
</dbReference>
<dbReference type="GO" id="GO:0034394">
    <property type="term" value="P:protein localization to cell surface"/>
    <property type="evidence" value="ECO:0000315"/>
    <property type="project" value="MGI"/>
</dbReference>
<dbReference type="GO" id="GO:0015031">
    <property type="term" value="P:protein transport"/>
    <property type="evidence" value="ECO:0007669"/>
    <property type="project" value="UniProtKB-KW"/>
</dbReference>
<dbReference type="GO" id="GO:0097006">
    <property type="term" value="P:regulation of plasma lipoprotein particle levels"/>
    <property type="evidence" value="ECO:0000315"/>
    <property type="project" value="MGI"/>
</dbReference>
<dbReference type="GO" id="GO:0032434">
    <property type="term" value="P:regulation of proteasomal ubiquitin-dependent protein catabolic process"/>
    <property type="evidence" value="ECO:0000250"/>
    <property type="project" value="UniProtKB"/>
</dbReference>
<dbReference type="CDD" id="cd04749">
    <property type="entry name" value="Commd1_MURR1"/>
    <property type="match status" value="1"/>
</dbReference>
<dbReference type="InterPro" id="IPR017920">
    <property type="entry name" value="COMM"/>
</dbReference>
<dbReference type="InterPro" id="IPR033776">
    <property type="entry name" value="COMMD1_N"/>
</dbReference>
<dbReference type="InterPro" id="IPR037351">
    <property type="entry name" value="Murr1"/>
</dbReference>
<dbReference type="PANTHER" id="PTHR21199">
    <property type="entry name" value="COMM DOMAIN-CONTAINING PROTEIN 1"/>
    <property type="match status" value="1"/>
</dbReference>
<dbReference type="PANTHER" id="PTHR21199:SF1">
    <property type="entry name" value="COMM DOMAIN-CONTAINING PROTEIN 1"/>
    <property type="match status" value="1"/>
</dbReference>
<dbReference type="Pfam" id="PF07258">
    <property type="entry name" value="COMM_domain"/>
    <property type="match status" value="1"/>
</dbReference>
<dbReference type="Pfam" id="PF17221">
    <property type="entry name" value="COMMD1_N"/>
    <property type="match status" value="1"/>
</dbReference>
<dbReference type="PROSITE" id="PS51269">
    <property type="entry name" value="COMM"/>
    <property type="match status" value="1"/>
</dbReference>
<organism>
    <name type="scientific">Mus musculus</name>
    <name type="common">Mouse</name>
    <dbReference type="NCBI Taxonomy" id="10090"/>
    <lineage>
        <taxon>Eukaryota</taxon>
        <taxon>Metazoa</taxon>
        <taxon>Chordata</taxon>
        <taxon>Craniata</taxon>
        <taxon>Vertebrata</taxon>
        <taxon>Euteleostomi</taxon>
        <taxon>Mammalia</taxon>
        <taxon>Eutheria</taxon>
        <taxon>Euarchontoglires</taxon>
        <taxon>Glires</taxon>
        <taxon>Rodentia</taxon>
        <taxon>Myomorpha</taxon>
        <taxon>Muroidea</taxon>
        <taxon>Muridae</taxon>
        <taxon>Murinae</taxon>
        <taxon>Mus</taxon>
        <taxon>Mus</taxon>
    </lineage>
</organism>